<accession>A6TGV2</accession>
<organism>
    <name type="scientific">Klebsiella pneumoniae subsp. pneumoniae (strain ATCC 700721 / MGH 78578)</name>
    <dbReference type="NCBI Taxonomy" id="272620"/>
    <lineage>
        <taxon>Bacteria</taxon>
        <taxon>Pseudomonadati</taxon>
        <taxon>Pseudomonadota</taxon>
        <taxon>Gammaproteobacteria</taxon>
        <taxon>Enterobacterales</taxon>
        <taxon>Enterobacteriaceae</taxon>
        <taxon>Klebsiella/Raoultella group</taxon>
        <taxon>Klebsiella</taxon>
        <taxon>Klebsiella pneumoniae complex</taxon>
    </lineage>
</organism>
<proteinExistence type="inferred from homology"/>
<name>LEXA_KLEP7</name>
<sequence>MKALTTRQQEVFDLIRDHISQTGMPPTRAEIAQRLGFRSPNAAEEHLKALARKGAIEIVSGASRGIRLLTEEEQGLPLIGRVAAGEPLLAQQHIEGHYQVDPSMFKPNADFLLRVSGMSMKDIGILDGDLLAVHKTQDVRNGQVVVARIDEEVTVKRLKKQGNVVELLPENSEFSPIVVDLRQQSFTIEGLAVGVIRNGEWL</sequence>
<feature type="chain" id="PRO_1000001296" description="LexA repressor">
    <location>
        <begin position="1"/>
        <end position="202"/>
    </location>
</feature>
<feature type="DNA-binding region" description="H-T-H motif" evidence="1">
    <location>
        <begin position="28"/>
        <end position="48"/>
    </location>
</feature>
<feature type="active site" description="For autocatalytic cleavage activity" evidence="1">
    <location>
        <position position="119"/>
    </location>
</feature>
<feature type="active site" description="For autocatalytic cleavage activity" evidence="1">
    <location>
        <position position="156"/>
    </location>
</feature>
<feature type="site" description="Cleavage; by autolysis" evidence="1">
    <location>
        <begin position="84"/>
        <end position="85"/>
    </location>
</feature>
<dbReference type="EC" id="3.4.21.88" evidence="1"/>
<dbReference type="EMBL" id="CP000647">
    <property type="protein sequence ID" value="ABR79786.1"/>
    <property type="molecule type" value="Genomic_DNA"/>
</dbReference>
<dbReference type="RefSeq" id="WP_002884822.1">
    <property type="nucleotide sequence ID" value="NC_009648.1"/>
</dbReference>
<dbReference type="SMR" id="A6TGV2"/>
<dbReference type="STRING" id="272620.KPN_04431"/>
<dbReference type="MEROPS" id="S24.001"/>
<dbReference type="jPOST" id="A6TGV2"/>
<dbReference type="PaxDb" id="272620-KPN_04431"/>
<dbReference type="EnsemblBacteria" id="ABR79786">
    <property type="protein sequence ID" value="ABR79786"/>
    <property type="gene ID" value="KPN_04431"/>
</dbReference>
<dbReference type="KEGG" id="kpn:KPN_04431"/>
<dbReference type="HOGENOM" id="CLU_066192_45_3_6"/>
<dbReference type="Proteomes" id="UP000000265">
    <property type="component" value="Chromosome"/>
</dbReference>
<dbReference type="GO" id="GO:0003677">
    <property type="term" value="F:DNA binding"/>
    <property type="evidence" value="ECO:0007669"/>
    <property type="project" value="UniProtKB-UniRule"/>
</dbReference>
<dbReference type="GO" id="GO:0004252">
    <property type="term" value="F:serine-type endopeptidase activity"/>
    <property type="evidence" value="ECO:0007669"/>
    <property type="project" value="UniProtKB-UniRule"/>
</dbReference>
<dbReference type="GO" id="GO:0006281">
    <property type="term" value="P:DNA repair"/>
    <property type="evidence" value="ECO:0007669"/>
    <property type="project" value="UniProtKB-UniRule"/>
</dbReference>
<dbReference type="GO" id="GO:0006260">
    <property type="term" value="P:DNA replication"/>
    <property type="evidence" value="ECO:0007669"/>
    <property type="project" value="UniProtKB-UniRule"/>
</dbReference>
<dbReference type="GO" id="GO:0045892">
    <property type="term" value="P:negative regulation of DNA-templated transcription"/>
    <property type="evidence" value="ECO:0007669"/>
    <property type="project" value="UniProtKB-UniRule"/>
</dbReference>
<dbReference type="GO" id="GO:0006508">
    <property type="term" value="P:proteolysis"/>
    <property type="evidence" value="ECO:0007669"/>
    <property type="project" value="InterPro"/>
</dbReference>
<dbReference type="GO" id="GO:0009432">
    <property type="term" value="P:SOS response"/>
    <property type="evidence" value="ECO:0007669"/>
    <property type="project" value="UniProtKB-UniRule"/>
</dbReference>
<dbReference type="CDD" id="cd06529">
    <property type="entry name" value="S24_LexA-like"/>
    <property type="match status" value="1"/>
</dbReference>
<dbReference type="FunFam" id="1.10.10.10:FF:000009">
    <property type="entry name" value="LexA repressor"/>
    <property type="match status" value="1"/>
</dbReference>
<dbReference type="FunFam" id="2.10.109.10:FF:000001">
    <property type="entry name" value="LexA repressor"/>
    <property type="match status" value="1"/>
</dbReference>
<dbReference type="Gene3D" id="2.10.109.10">
    <property type="entry name" value="Umud Fragment, subunit A"/>
    <property type="match status" value="1"/>
</dbReference>
<dbReference type="Gene3D" id="1.10.10.10">
    <property type="entry name" value="Winged helix-like DNA-binding domain superfamily/Winged helix DNA-binding domain"/>
    <property type="match status" value="1"/>
</dbReference>
<dbReference type="HAMAP" id="MF_00015">
    <property type="entry name" value="LexA"/>
    <property type="match status" value="1"/>
</dbReference>
<dbReference type="InterPro" id="IPR006200">
    <property type="entry name" value="LexA"/>
</dbReference>
<dbReference type="InterPro" id="IPR039418">
    <property type="entry name" value="LexA-like"/>
</dbReference>
<dbReference type="InterPro" id="IPR036286">
    <property type="entry name" value="LexA/Signal_pep-like_sf"/>
</dbReference>
<dbReference type="InterPro" id="IPR006199">
    <property type="entry name" value="LexA_DNA-bd_dom"/>
</dbReference>
<dbReference type="InterPro" id="IPR050077">
    <property type="entry name" value="LexA_repressor"/>
</dbReference>
<dbReference type="InterPro" id="IPR006197">
    <property type="entry name" value="Peptidase_S24_LexA"/>
</dbReference>
<dbReference type="InterPro" id="IPR015927">
    <property type="entry name" value="Peptidase_S24_S26A/B/C"/>
</dbReference>
<dbReference type="InterPro" id="IPR036388">
    <property type="entry name" value="WH-like_DNA-bd_sf"/>
</dbReference>
<dbReference type="InterPro" id="IPR036390">
    <property type="entry name" value="WH_DNA-bd_sf"/>
</dbReference>
<dbReference type="NCBIfam" id="TIGR00498">
    <property type="entry name" value="lexA"/>
    <property type="match status" value="1"/>
</dbReference>
<dbReference type="PANTHER" id="PTHR33516">
    <property type="entry name" value="LEXA REPRESSOR"/>
    <property type="match status" value="1"/>
</dbReference>
<dbReference type="PANTHER" id="PTHR33516:SF2">
    <property type="entry name" value="LEXA REPRESSOR-RELATED"/>
    <property type="match status" value="1"/>
</dbReference>
<dbReference type="Pfam" id="PF01726">
    <property type="entry name" value="LexA_DNA_bind"/>
    <property type="match status" value="1"/>
</dbReference>
<dbReference type="Pfam" id="PF00717">
    <property type="entry name" value="Peptidase_S24"/>
    <property type="match status" value="1"/>
</dbReference>
<dbReference type="PRINTS" id="PR00726">
    <property type="entry name" value="LEXASERPTASE"/>
</dbReference>
<dbReference type="SUPFAM" id="SSF51306">
    <property type="entry name" value="LexA/Signal peptidase"/>
    <property type="match status" value="1"/>
</dbReference>
<dbReference type="SUPFAM" id="SSF46785">
    <property type="entry name" value="Winged helix' DNA-binding domain"/>
    <property type="match status" value="1"/>
</dbReference>
<gene>
    <name evidence="1" type="primary">lexA</name>
    <name type="ordered locus">KPN78578_43620</name>
    <name type="ORF">KPN_04431</name>
</gene>
<evidence type="ECO:0000255" key="1">
    <source>
        <dbReference type="HAMAP-Rule" id="MF_00015"/>
    </source>
</evidence>
<comment type="function">
    <text evidence="1">Represses a number of genes involved in the response to DNA damage (SOS response), including recA and lexA. Binds to the 16 bp palindromic sequence 5'-CTGTATATATATACAG-3'. In the presence of single-stranded DNA, RecA interacts with LexA causing an autocatalytic cleavage which disrupts the DNA-binding part of LexA, leading to derepression of the SOS regulon and eventually DNA repair.</text>
</comment>
<comment type="catalytic activity">
    <reaction evidence="1">
        <text>Hydrolysis of Ala-|-Gly bond in repressor LexA.</text>
        <dbReference type="EC" id="3.4.21.88"/>
    </reaction>
</comment>
<comment type="subunit">
    <text evidence="1">Homodimer.</text>
</comment>
<comment type="similarity">
    <text evidence="1">Belongs to the peptidase S24 family.</text>
</comment>
<keyword id="KW-0068">Autocatalytic cleavage</keyword>
<keyword id="KW-0227">DNA damage</keyword>
<keyword id="KW-0234">DNA repair</keyword>
<keyword id="KW-0235">DNA replication</keyword>
<keyword id="KW-0238">DNA-binding</keyword>
<keyword id="KW-0378">Hydrolase</keyword>
<keyword id="KW-0678">Repressor</keyword>
<keyword id="KW-0742">SOS response</keyword>
<keyword id="KW-0804">Transcription</keyword>
<keyword id="KW-0805">Transcription regulation</keyword>
<protein>
    <recommendedName>
        <fullName evidence="1">LexA repressor</fullName>
        <ecNumber evidence="1">3.4.21.88</ecNumber>
    </recommendedName>
</protein>
<reference key="1">
    <citation type="submission" date="2006-09" db="EMBL/GenBank/DDBJ databases">
        <authorList>
            <consortium name="The Klebsiella pneumonia Genome Sequencing Project"/>
            <person name="McClelland M."/>
            <person name="Sanderson E.K."/>
            <person name="Spieth J."/>
            <person name="Clifton W.S."/>
            <person name="Latreille P."/>
            <person name="Sabo A."/>
            <person name="Pepin K."/>
            <person name="Bhonagiri V."/>
            <person name="Porwollik S."/>
            <person name="Ali J."/>
            <person name="Wilson R.K."/>
        </authorList>
    </citation>
    <scope>NUCLEOTIDE SEQUENCE [LARGE SCALE GENOMIC DNA]</scope>
    <source>
        <strain>ATCC 700721 / MGH 78578</strain>
    </source>
</reference>